<comment type="function">
    <text evidence="1">Catalyzes the reduction of hydroxylamine to form NH(3) and H(2)O.</text>
</comment>
<comment type="catalytic activity">
    <reaction evidence="1">
        <text>A + NH4(+) + H2O = hydroxylamine + AH2 + H(+)</text>
        <dbReference type="Rhea" id="RHEA:22052"/>
        <dbReference type="ChEBI" id="CHEBI:13193"/>
        <dbReference type="ChEBI" id="CHEBI:15377"/>
        <dbReference type="ChEBI" id="CHEBI:15378"/>
        <dbReference type="ChEBI" id="CHEBI:15429"/>
        <dbReference type="ChEBI" id="CHEBI:17499"/>
        <dbReference type="ChEBI" id="CHEBI:28938"/>
        <dbReference type="EC" id="1.7.99.1"/>
    </reaction>
</comment>
<comment type="cofactor">
    <cofactor evidence="1">
        <name>[2Fe-2S] cluster</name>
        <dbReference type="ChEBI" id="CHEBI:190135"/>
    </cofactor>
    <text evidence="1">Binds 1 [2Fe-2S] cluster.</text>
</comment>
<comment type="cofactor">
    <cofactor evidence="1">
        <name>hybrid [4Fe-2O-2S] cluster</name>
        <dbReference type="ChEBI" id="CHEBI:60519"/>
    </cofactor>
    <text evidence="1">Binds 1 hybrid [4Fe-2O-2S] cluster.</text>
</comment>
<comment type="subcellular location">
    <subcellularLocation>
        <location evidence="1">Cytoplasm</location>
    </subcellularLocation>
</comment>
<comment type="similarity">
    <text evidence="1">Belongs to the HCP family.</text>
</comment>
<keyword id="KW-0001">2Fe-2S</keyword>
<keyword id="KW-0963">Cytoplasm</keyword>
<keyword id="KW-0408">Iron</keyword>
<keyword id="KW-0411">Iron-sulfur</keyword>
<keyword id="KW-0479">Metal-binding</keyword>
<keyword id="KW-0560">Oxidoreductase</keyword>
<keyword id="KW-1185">Reference proteome</keyword>
<proteinExistence type="inferred from homology"/>
<sequence length="554" mass="60279">MFCIQCEQTIRTPAGNGCSYSQGMCGKLAATSDLQDLLIYMLQGVSVYAVKAREQGIIDAEIDSFVPKAFFSTLTNVNFDDERIMAYAQQAAKYRTQLKASYEAACEQAGIVAEQVPQVAQLVLGTSKVEMLAQAPIALLNKDKHNVHEDIMGLRLLCLYGLKGAAAYMEHARVLGQTDADVAGRFHEIMSFLGEPSVDGDKLFTTAMDIGQLNYRIMAMLDAGETQAFGHPEPTVVNTKSVKGKAILVSGHDMKDLELILEQTVGKGINVFTHGEMLPALAYPAFKKYPHLVGNYGSAWQNQQQEFANFPGAVVMTSNCIIDPNVGSYSDRIFTRSIVGWPGVVHIEGDDFSAVIDKALVLEGFIYDEIPHTITIGFARNALMAAAPAVVENVKSGAIKHFFLVGGCDGDKADRSYFTELAKSTPKDSLILTLGCGKYKFNKLEFGDINGIPRLLDVGQCNDAYSAIQLAIALAEVFECNINELPLSLVLSWFEQKAIVVLLTLLSLGVKNMRTGPTPPAFLTANLAKILEEKFGLRNTTTVEADLKTMLNVA</sequence>
<feature type="chain" id="PRO_1000009163" description="Hydroxylamine reductase">
    <location>
        <begin position="1"/>
        <end position="554"/>
    </location>
</feature>
<feature type="binding site" evidence="1">
    <location>
        <position position="3"/>
    </location>
    <ligand>
        <name>[2Fe-2S] cluster</name>
        <dbReference type="ChEBI" id="CHEBI:190135"/>
    </ligand>
</feature>
<feature type="binding site" evidence="1">
    <location>
        <position position="6"/>
    </location>
    <ligand>
        <name>[2Fe-2S] cluster</name>
        <dbReference type="ChEBI" id="CHEBI:190135"/>
    </ligand>
</feature>
<feature type="binding site" evidence="1">
    <location>
        <position position="18"/>
    </location>
    <ligand>
        <name>[2Fe-2S] cluster</name>
        <dbReference type="ChEBI" id="CHEBI:190135"/>
    </ligand>
</feature>
<feature type="binding site" evidence="1">
    <location>
        <position position="25"/>
    </location>
    <ligand>
        <name>[2Fe-2S] cluster</name>
        <dbReference type="ChEBI" id="CHEBI:190135"/>
    </ligand>
</feature>
<feature type="binding site" evidence="1">
    <location>
        <position position="252"/>
    </location>
    <ligand>
        <name>hybrid [4Fe-2O-2S] cluster</name>
        <dbReference type="ChEBI" id="CHEBI:60519"/>
    </ligand>
</feature>
<feature type="binding site" evidence="1">
    <location>
        <position position="276"/>
    </location>
    <ligand>
        <name>hybrid [4Fe-2O-2S] cluster</name>
        <dbReference type="ChEBI" id="CHEBI:60519"/>
    </ligand>
</feature>
<feature type="binding site" evidence="1">
    <location>
        <position position="320"/>
    </location>
    <ligand>
        <name>hybrid [4Fe-2O-2S] cluster</name>
        <dbReference type="ChEBI" id="CHEBI:60519"/>
    </ligand>
</feature>
<feature type="binding site" description="via persulfide group" evidence="1">
    <location>
        <position position="408"/>
    </location>
    <ligand>
        <name>hybrid [4Fe-2O-2S] cluster</name>
        <dbReference type="ChEBI" id="CHEBI:60519"/>
    </ligand>
</feature>
<feature type="binding site" evidence="1">
    <location>
        <position position="436"/>
    </location>
    <ligand>
        <name>hybrid [4Fe-2O-2S] cluster</name>
        <dbReference type="ChEBI" id="CHEBI:60519"/>
    </ligand>
</feature>
<feature type="binding site" evidence="1">
    <location>
        <position position="461"/>
    </location>
    <ligand>
        <name>hybrid [4Fe-2O-2S] cluster</name>
        <dbReference type="ChEBI" id="CHEBI:60519"/>
    </ligand>
</feature>
<feature type="binding site" evidence="1">
    <location>
        <position position="495"/>
    </location>
    <ligand>
        <name>hybrid [4Fe-2O-2S] cluster</name>
        <dbReference type="ChEBI" id="CHEBI:60519"/>
    </ligand>
</feature>
<feature type="binding site" evidence="1">
    <location>
        <position position="497"/>
    </location>
    <ligand>
        <name>hybrid [4Fe-2O-2S] cluster</name>
        <dbReference type="ChEBI" id="CHEBI:60519"/>
    </ligand>
</feature>
<feature type="modified residue" description="Cysteine persulfide" evidence="1">
    <location>
        <position position="408"/>
    </location>
</feature>
<dbReference type="EC" id="1.7.99.1" evidence="1"/>
<dbReference type="EMBL" id="CP000563">
    <property type="protein sequence ID" value="ABN60734.1"/>
    <property type="molecule type" value="Genomic_DNA"/>
</dbReference>
<dbReference type="RefSeq" id="WP_011846173.1">
    <property type="nucleotide sequence ID" value="NC_009052.1"/>
</dbReference>
<dbReference type="SMR" id="A3D1X1"/>
<dbReference type="STRING" id="325240.Sbal_1216"/>
<dbReference type="KEGG" id="sbl:Sbal_1216"/>
<dbReference type="HOGENOM" id="CLU_038344_2_0_6"/>
<dbReference type="OrthoDB" id="9761526at2"/>
<dbReference type="Proteomes" id="UP000001557">
    <property type="component" value="Chromosome"/>
</dbReference>
<dbReference type="GO" id="GO:0005737">
    <property type="term" value="C:cytoplasm"/>
    <property type="evidence" value="ECO:0007669"/>
    <property type="project" value="UniProtKB-SubCell"/>
</dbReference>
<dbReference type="GO" id="GO:0051537">
    <property type="term" value="F:2 iron, 2 sulfur cluster binding"/>
    <property type="evidence" value="ECO:0007669"/>
    <property type="project" value="UniProtKB-KW"/>
</dbReference>
<dbReference type="GO" id="GO:0050418">
    <property type="term" value="F:hydroxylamine reductase activity"/>
    <property type="evidence" value="ECO:0007669"/>
    <property type="project" value="UniProtKB-UniRule"/>
</dbReference>
<dbReference type="GO" id="GO:0046872">
    <property type="term" value="F:metal ion binding"/>
    <property type="evidence" value="ECO:0007669"/>
    <property type="project" value="UniProtKB-KW"/>
</dbReference>
<dbReference type="GO" id="GO:0004601">
    <property type="term" value="F:peroxidase activity"/>
    <property type="evidence" value="ECO:0007669"/>
    <property type="project" value="TreeGrafter"/>
</dbReference>
<dbReference type="GO" id="GO:0042542">
    <property type="term" value="P:response to hydrogen peroxide"/>
    <property type="evidence" value="ECO:0007669"/>
    <property type="project" value="TreeGrafter"/>
</dbReference>
<dbReference type="CDD" id="cd01914">
    <property type="entry name" value="HCP"/>
    <property type="match status" value="1"/>
</dbReference>
<dbReference type="FunFam" id="1.20.1270.20:FF:000001">
    <property type="entry name" value="Hydroxylamine reductase"/>
    <property type="match status" value="1"/>
</dbReference>
<dbReference type="FunFam" id="1.20.1270.20:FF:000002">
    <property type="entry name" value="Hydroxylamine reductase"/>
    <property type="match status" value="1"/>
</dbReference>
<dbReference type="FunFam" id="3.40.50.2030:FF:000001">
    <property type="entry name" value="Hydroxylamine reductase"/>
    <property type="match status" value="1"/>
</dbReference>
<dbReference type="FunFam" id="3.40.50.2030:FF:000002">
    <property type="entry name" value="Hydroxylamine reductase"/>
    <property type="match status" value="1"/>
</dbReference>
<dbReference type="Gene3D" id="1.20.1270.20">
    <property type="match status" value="2"/>
</dbReference>
<dbReference type="Gene3D" id="3.40.50.2030">
    <property type="match status" value="2"/>
</dbReference>
<dbReference type="HAMAP" id="MF_00069">
    <property type="entry name" value="Hydroxylam_reduct"/>
    <property type="match status" value="1"/>
</dbReference>
<dbReference type="InterPro" id="IPR004137">
    <property type="entry name" value="HCP/CODH"/>
</dbReference>
<dbReference type="InterPro" id="IPR010048">
    <property type="entry name" value="Hydroxylam_reduct"/>
</dbReference>
<dbReference type="InterPro" id="IPR016099">
    <property type="entry name" value="Prismane-like_a/b-sand"/>
</dbReference>
<dbReference type="InterPro" id="IPR011254">
    <property type="entry name" value="Prismane-like_sf"/>
</dbReference>
<dbReference type="InterPro" id="IPR016100">
    <property type="entry name" value="Prismane_a-bundle"/>
</dbReference>
<dbReference type="NCBIfam" id="TIGR01703">
    <property type="entry name" value="hybrid_clust"/>
    <property type="match status" value="1"/>
</dbReference>
<dbReference type="NCBIfam" id="NF003658">
    <property type="entry name" value="PRK05290.1"/>
    <property type="match status" value="1"/>
</dbReference>
<dbReference type="PANTHER" id="PTHR30109">
    <property type="entry name" value="HYDROXYLAMINE REDUCTASE"/>
    <property type="match status" value="1"/>
</dbReference>
<dbReference type="PANTHER" id="PTHR30109:SF0">
    <property type="entry name" value="HYDROXYLAMINE REDUCTASE"/>
    <property type="match status" value="1"/>
</dbReference>
<dbReference type="Pfam" id="PF03063">
    <property type="entry name" value="Prismane"/>
    <property type="match status" value="1"/>
</dbReference>
<dbReference type="PIRSF" id="PIRSF000076">
    <property type="entry name" value="HCP"/>
    <property type="match status" value="1"/>
</dbReference>
<dbReference type="SUPFAM" id="SSF56821">
    <property type="entry name" value="Prismane protein-like"/>
    <property type="match status" value="1"/>
</dbReference>
<evidence type="ECO:0000255" key="1">
    <source>
        <dbReference type="HAMAP-Rule" id="MF_00069"/>
    </source>
</evidence>
<name>HCP_SHEB5</name>
<reference key="1">
    <citation type="submission" date="2007-02" db="EMBL/GenBank/DDBJ databases">
        <title>Complete sequence of chromosome of Shewanella baltica OS155.</title>
        <authorList>
            <consortium name="US DOE Joint Genome Institute"/>
            <person name="Copeland A."/>
            <person name="Lucas S."/>
            <person name="Lapidus A."/>
            <person name="Barry K."/>
            <person name="Detter J.C."/>
            <person name="Glavina del Rio T."/>
            <person name="Hammon N."/>
            <person name="Israni S."/>
            <person name="Dalin E."/>
            <person name="Tice H."/>
            <person name="Pitluck S."/>
            <person name="Sims D.R."/>
            <person name="Brettin T."/>
            <person name="Bruce D."/>
            <person name="Han C."/>
            <person name="Tapia R."/>
            <person name="Brainard J."/>
            <person name="Schmutz J."/>
            <person name="Larimer F."/>
            <person name="Land M."/>
            <person name="Hauser L."/>
            <person name="Kyrpides N."/>
            <person name="Mikhailova N."/>
            <person name="Brettar I."/>
            <person name="Klappenbach J."/>
            <person name="Konstantinidis K."/>
            <person name="Rodrigues J."/>
            <person name="Tiedje J."/>
            <person name="Richardson P."/>
        </authorList>
    </citation>
    <scope>NUCLEOTIDE SEQUENCE [LARGE SCALE GENOMIC DNA]</scope>
    <source>
        <strain>OS155 / ATCC BAA-1091</strain>
    </source>
</reference>
<accession>A3D1X1</accession>
<organism>
    <name type="scientific">Shewanella baltica (strain OS155 / ATCC BAA-1091)</name>
    <dbReference type="NCBI Taxonomy" id="325240"/>
    <lineage>
        <taxon>Bacteria</taxon>
        <taxon>Pseudomonadati</taxon>
        <taxon>Pseudomonadota</taxon>
        <taxon>Gammaproteobacteria</taxon>
        <taxon>Alteromonadales</taxon>
        <taxon>Shewanellaceae</taxon>
        <taxon>Shewanella</taxon>
    </lineage>
</organism>
<gene>
    <name evidence="1" type="primary">hcp</name>
    <name type="ordered locus">Sbal_1216</name>
</gene>
<protein>
    <recommendedName>
        <fullName evidence="1">Hydroxylamine reductase</fullName>
        <ecNumber evidence="1">1.7.99.1</ecNumber>
    </recommendedName>
    <alternativeName>
        <fullName evidence="1">Hybrid-cluster protein</fullName>
        <shortName evidence="1">HCP</shortName>
    </alternativeName>
    <alternativeName>
        <fullName evidence="1">Prismane protein</fullName>
    </alternativeName>
</protein>